<accession>C0ZNE8</accession>
<comment type="function">
    <text evidence="1">Catalyzes the hydrolysis of short-chain aliphatic amides to their corresponding organic acids with release of ammonia.</text>
</comment>
<comment type="function">
    <text evidence="1">Also exhibits in vitro acyl transferase activity, transferring the acyl moiety of short-chain amides to hydroxylamine to form hydroxamates.</text>
</comment>
<comment type="catalytic activity">
    <reaction evidence="1">
        <text>a monocarboxylic acid amide + H2O = a monocarboxylate + NH4(+)</text>
        <dbReference type="Rhea" id="RHEA:12020"/>
        <dbReference type="ChEBI" id="CHEBI:15377"/>
        <dbReference type="ChEBI" id="CHEBI:28938"/>
        <dbReference type="ChEBI" id="CHEBI:35757"/>
        <dbReference type="ChEBI" id="CHEBI:83628"/>
        <dbReference type="EC" id="3.5.1.4"/>
    </reaction>
</comment>
<comment type="similarity">
    <text evidence="1">Belongs to the carbon-nitrogen hydrolase superfamily. Aliphatic amidase family.</text>
</comment>
<keyword id="KW-0378">Hydrolase</keyword>
<organism>
    <name type="scientific">Rhodococcus erythropolis (strain PR4 / NBRC 100887)</name>
    <dbReference type="NCBI Taxonomy" id="234621"/>
    <lineage>
        <taxon>Bacteria</taxon>
        <taxon>Bacillati</taxon>
        <taxon>Actinomycetota</taxon>
        <taxon>Actinomycetes</taxon>
        <taxon>Mycobacteriales</taxon>
        <taxon>Nocardiaceae</taxon>
        <taxon>Rhodococcus</taxon>
        <taxon>Rhodococcus erythropolis group</taxon>
    </lineage>
</organism>
<protein>
    <recommendedName>
        <fullName evidence="1">Aliphatic amidase</fullName>
        <ecNumber evidence="1">3.5.1.4</ecNumber>
    </recommendedName>
    <alternativeName>
        <fullName evidence="1">Acylamide amidohydrolase</fullName>
    </alternativeName>
</protein>
<proteinExistence type="inferred from homology"/>
<gene>
    <name evidence="1" type="primary">amiE</name>
    <name type="ordered locus">RER_04920</name>
</gene>
<feature type="chain" id="PRO_1000214091" description="Aliphatic amidase">
    <location>
        <begin position="1"/>
        <end position="345"/>
    </location>
</feature>
<feature type="domain" description="CN hydrolase" evidence="2">
    <location>
        <begin position="13"/>
        <end position="260"/>
    </location>
</feature>
<feature type="active site" description="Proton acceptor" evidence="1">
    <location>
        <position position="59"/>
    </location>
</feature>
<feature type="active site" description="Proton donor" evidence="1">
    <location>
        <position position="134"/>
    </location>
</feature>
<feature type="active site" description="Nucleophile" evidence="1">
    <location>
        <position position="166"/>
    </location>
</feature>
<reference key="1">
    <citation type="submission" date="2005-03" db="EMBL/GenBank/DDBJ databases">
        <title>Comparison of the complete genome sequences of Rhodococcus erythropolis PR4 and Rhodococcus opacus B4.</title>
        <authorList>
            <person name="Takarada H."/>
            <person name="Sekine M."/>
            <person name="Hosoyama A."/>
            <person name="Yamada R."/>
            <person name="Fujisawa T."/>
            <person name="Omata S."/>
            <person name="Shimizu A."/>
            <person name="Tsukatani N."/>
            <person name="Tanikawa S."/>
            <person name="Fujita N."/>
            <person name="Harayama S."/>
        </authorList>
    </citation>
    <scope>NUCLEOTIDE SEQUENCE [LARGE SCALE GENOMIC DNA]</scope>
    <source>
        <strain>PR4 / NBRC 100887</strain>
    </source>
</reference>
<dbReference type="EC" id="3.5.1.4" evidence="1"/>
<dbReference type="EMBL" id="AP008957">
    <property type="protein sequence ID" value="BAH31200.1"/>
    <property type="molecule type" value="Genomic_DNA"/>
</dbReference>
<dbReference type="RefSeq" id="WP_019746630.1">
    <property type="nucleotide sequence ID" value="NC_012490.1"/>
</dbReference>
<dbReference type="SMR" id="C0ZNE8"/>
<dbReference type="KEGG" id="rer:RER_04920"/>
<dbReference type="eggNOG" id="COG0388">
    <property type="taxonomic scope" value="Bacteria"/>
</dbReference>
<dbReference type="HOGENOM" id="CLU_071797_0_0_11"/>
<dbReference type="Proteomes" id="UP000002204">
    <property type="component" value="Chromosome"/>
</dbReference>
<dbReference type="GO" id="GO:0004040">
    <property type="term" value="F:amidase activity"/>
    <property type="evidence" value="ECO:0007669"/>
    <property type="project" value="UniProtKB-UniRule"/>
</dbReference>
<dbReference type="CDD" id="cd07565">
    <property type="entry name" value="aliphatic_amidase"/>
    <property type="match status" value="1"/>
</dbReference>
<dbReference type="Gene3D" id="3.60.110.10">
    <property type="entry name" value="Carbon-nitrogen hydrolase"/>
    <property type="match status" value="1"/>
</dbReference>
<dbReference type="HAMAP" id="MF_01242">
    <property type="entry name" value="Aliphatic_amidase"/>
    <property type="match status" value="1"/>
</dbReference>
<dbReference type="InterPro" id="IPR050345">
    <property type="entry name" value="Aliph_Amidase/BUP"/>
</dbReference>
<dbReference type="InterPro" id="IPR023719">
    <property type="entry name" value="Aliphatic_amidase"/>
</dbReference>
<dbReference type="InterPro" id="IPR003010">
    <property type="entry name" value="C-N_Hydrolase"/>
</dbReference>
<dbReference type="InterPro" id="IPR036526">
    <property type="entry name" value="C-N_Hydrolase_sf"/>
</dbReference>
<dbReference type="NCBIfam" id="NF009802">
    <property type="entry name" value="PRK13286.1"/>
    <property type="match status" value="1"/>
</dbReference>
<dbReference type="PANTHER" id="PTHR43674:SF14">
    <property type="entry name" value="ALIPHATIC AMIDASE"/>
    <property type="match status" value="1"/>
</dbReference>
<dbReference type="PANTHER" id="PTHR43674">
    <property type="entry name" value="NITRILASE C965.09-RELATED"/>
    <property type="match status" value="1"/>
</dbReference>
<dbReference type="Pfam" id="PF00795">
    <property type="entry name" value="CN_hydrolase"/>
    <property type="match status" value="1"/>
</dbReference>
<dbReference type="SUPFAM" id="SSF56317">
    <property type="entry name" value="Carbon-nitrogen hydrolase"/>
    <property type="match status" value="1"/>
</dbReference>
<dbReference type="PROSITE" id="PS50263">
    <property type="entry name" value="CN_HYDROLASE"/>
    <property type="match status" value="1"/>
</dbReference>
<name>AMIE_RHOE4</name>
<evidence type="ECO:0000255" key="1">
    <source>
        <dbReference type="HAMAP-Rule" id="MF_01242"/>
    </source>
</evidence>
<evidence type="ECO:0000255" key="2">
    <source>
        <dbReference type="PROSITE-ProRule" id="PRU00054"/>
    </source>
</evidence>
<sequence>MRHGDISSSNDTVGVAVVNYKMPRLHDRAGVLENARKIADMMIGMKTGLPGMDLVVFPEYSTQGIMYNEEEMYATAATIPGDETAIFSAACREADTWGIFSITGEQHEDHPNKPPYNTLILIDNKGEIVQKYRKILPWCPIEGWYPGDTTYVSEGPKGLKISLIICDDGNYPEIWRDCAMKGAELIVRCQGYMYPAKDQQVMMSKAMAWANNCYVAVANAAGFDGVYSYFGHSAIIGFDGRTLGETGEEEYGIQYAQLSVSAIRDARENDQSQNHIFKLLHRGYSGVHAAGDGDKGVADCPFEFYKLWVTDAQKAQERVEAITRDTVGVADCRVGNLPVEKTIEV</sequence>